<keyword id="KW-1185">Reference proteome</keyword>
<gene>
    <name type="ordered locus">Adeh_3614</name>
</gene>
<name>CINAL_ANADE</name>
<protein>
    <recommendedName>
        <fullName evidence="1">CinA-like protein</fullName>
    </recommendedName>
</protein>
<dbReference type="EMBL" id="CP000251">
    <property type="protein sequence ID" value="ABC83380.1"/>
    <property type="molecule type" value="Genomic_DNA"/>
</dbReference>
<dbReference type="RefSeq" id="WP_011422662.1">
    <property type="nucleotide sequence ID" value="NC_007760.1"/>
</dbReference>
<dbReference type="SMR" id="Q2IFM3"/>
<dbReference type="STRING" id="290397.Adeh_3614"/>
<dbReference type="KEGG" id="ade:Adeh_3614"/>
<dbReference type="eggNOG" id="COG1058">
    <property type="taxonomic scope" value="Bacteria"/>
</dbReference>
<dbReference type="eggNOG" id="COG1546">
    <property type="taxonomic scope" value="Bacteria"/>
</dbReference>
<dbReference type="HOGENOM" id="CLU_030805_9_2_7"/>
<dbReference type="OrthoDB" id="9801454at2"/>
<dbReference type="Proteomes" id="UP000001935">
    <property type="component" value="Chromosome"/>
</dbReference>
<dbReference type="CDD" id="cd00885">
    <property type="entry name" value="cinA"/>
    <property type="match status" value="1"/>
</dbReference>
<dbReference type="Gene3D" id="3.90.950.20">
    <property type="entry name" value="CinA-like"/>
    <property type="match status" value="1"/>
</dbReference>
<dbReference type="Gene3D" id="3.40.980.10">
    <property type="entry name" value="MoaB/Mog-like domain"/>
    <property type="match status" value="1"/>
</dbReference>
<dbReference type="HAMAP" id="MF_00226_B">
    <property type="entry name" value="CinA_B"/>
    <property type="match status" value="1"/>
</dbReference>
<dbReference type="InterPro" id="IPR050101">
    <property type="entry name" value="CinA"/>
</dbReference>
<dbReference type="InterPro" id="IPR036653">
    <property type="entry name" value="CinA-like_C"/>
</dbReference>
<dbReference type="InterPro" id="IPR008136">
    <property type="entry name" value="CinA_C"/>
</dbReference>
<dbReference type="InterPro" id="IPR008135">
    <property type="entry name" value="Competence-induced_CinA"/>
</dbReference>
<dbReference type="InterPro" id="IPR036425">
    <property type="entry name" value="MoaB/Mog-like_dom_sf"/>
</dbReference>
<dbReference type="InterPro" id="IPR001453">
    <property type="entry name" value="MoaB/Mog_dom"/>
</dbReference>
<dbReference type="NCBIfam" id="TIGR00200">
    <property type="entry name" value="cinA_nterm"/>
    <property type="match status" value="1"/>
</dbReference>
<dbReference type="NCBIfam" id="TIGR00177">
    <property type="entry name" value="molyb_syn"/>
    <property type="match status" value="1"/>
</dbReference>
<dbReference type="NCBIfam" id="TIGR00199">
    <property type="entry name" value="PncC_domain"/>
    <property type="match status" value="1"/>
</dbReference>
<dbReference type="PANTHER" id="PTHR13939">
    <property type="entry name" value="NICOTINAMIDE-NUCLEOTIDE AMIDOHYDROLASE PNCC"/>
    <property type="match status" value="1"/>
</dbReference>
<dbReference type="PANTHER" id="PTHR13939:SF0">
    <property type="entry name" value="NMN AMIDOHYDROLASE-LIKE PROTEIN YFAY"/>
    <property type="match status" value="1"/>
</dbReference>
<dbReference type="Pfam" id="PF02464">
    <property type="entry name" value="CinA"/>
    <property type="match status" value="1"/>
</dbReference>
<dbReference type="Pfam" id="PF00994">
    <property type="entry name" value="MoCF_biosynth"/>
    <property type="match status" value="1"/>
</dbReference>
<dbReference type="PIRSF" id="PIRSF006728">
    <property type="entry name" value="CinA"/>
    <property type="match status" value="1"/>
</dbReference>
<dbReference type="SMART" id="SM00852">
    <property type="entry name" value="MoCF_biosynth"/>
    <property type="match status" value="1"/>
</dbReference>
<dbReference type="SUPFAM" id="SSF142433">
    <property type="entry name" value="CinA-like"/>
    <property type="match status" value="1"/>
</dbReference>
<dbReference type="SUPFAM" id="SSF53218">
    <property type="entry name" value="Molybdenum cofactor biosynthesis proteins"/>
    <property type="match status" value="1"/>
</dbReference>
<comment type="similarity">
    <text evidence="1">Belongs to the CinA family.</text>
</comment>
<organism>
    <name type="scientific">Anaeromyxobacter dehalogenans (strain 2CP-C)</name>
    <dbReference type="NCBI Taxonomy" id="290397"/>
    <lineage>
        <taxon>Bacteria</taxon>
        <taxon>Pseudomonadati</taxon>
        <taxon>Myxococcota</taxon>
        <taxon>Myxococcia</taxon>
        <taxon>Myxococcales</taxon>
        <taxon>Cystobacterineae</taxon>
        <taxon>Anaeromyxobacteraceae</taxon>
        <taxon>Anaeromyxobacter</taxon>
    </lineage>
</organism>
<reference key="1">
    <citation type="submission" date="2006-01" db="EMBL/GenBank/DDBJ databases">
        <title>Complete sequence of Anaeromyxobacter dehalogenans 2CP-C.</title>
        <authorList>
            <person name="Copeland A."/>
            <person name="Lucas S."/>
            <person name="Lapidus A."/>
            <person name="Barry K."/>
            <person name="Detter J.C."/>
            <person name="Glavina T."/>
            <person name="Hammon N."/>
            <person name="Israni S."/>
            <person name="Pitluck S."/>
            <person name="Brettin T."/>
            <person name="Bruce D."/>
            <person name="Han C."/>
            <person name="Tapia R."/>
            <person name="Gilna P."/>
            <person name="Kiss H."/>
            <person name="Schmutz J."/>
            <person name="Larimer F."/>
            <person name="Land M."/>
            <person name="Kyrpides N."/>
            <person name="Anderson I."/>
            <person name="Sanford R.A."/>
            <person name="Ritalahti K.M."/>
            <person name="Thomas H.S."/>
            <person name="Kirby J.R."/>
            <person name="Zhulin I.B."/>
            <person name="Loeffler F.E."/>
            <person name="Richardson P."/>
        </authorList>
    </citation>
    <scope>NUCLEOTIDE SEQUENCE [LARGE SCALE GENOMIC DNA]</scope>
    <source>
        <strain>2CP-C</strain>
    </source>
</reference>
<proteinExistence type="inferred from homology"/>
<sequence>MQVEILATGDELLTGQVVDTNSPWLMDRLWDLGLMVRRKTLVADDRDDLRAAILETTGRADLVVMSGGMGPTEDDLTSECVAAVLGVPLERHEPSIELLRERFRKFGRTLTPNNEKQAWFPRGAEVIPNRWGSAPGFTVQVGRGRVVCLPGVPVEYRGLCDEWVLPHVRARLGEVPAAGLVKLFAVPESHADHAMRPVMDDAANAGVRFGYRAHWPEVHVKWTVPGPDAAARAARIRERVLGIFGEQVFGEGKDELPDLVVARLAARGERVALGESCTGGMVAELLTSVAGASAVLDLGVVAYANAAKEQVLGVPAALLAAHGAVSEPVARALAEGARRTAGAAWGVGITGIAGPSGGTPEKPVGTVHLAVAGPSGTEAVARAYRGDRDRVRRQAAYEALNLLRLALR</sequence>
<accession>Q2IFM3</accession>
<feature type="chain" id="PRO_1000058690" description="CinA-like protein">
    <location>
        <begin position="1"/>
        <end position="408"/>
    </location>
</feature>
<evidence type="ECO:0000255" key="1">
    <source>
        <dbReference type="HAMAP-Rule" id="MF_00226"/>
    </source>
</evidence>